<evidence type="ECO:0000255" key="1">
    <source>
        <dbReference type="HAMAP-Rule" id="MF_01865"/>
    </source>
</evidence>
<evidence type="ECO:0000255" key="2">
    <source>
        <dbReference type="PROSITE-ProRule" id="PRU01266"/>
    </source>
</evidence>
<gene>
    <name evidence="1" type="primary">rimO</name>
    <name type="ordered locus">Sfum_1585</name>
</gene>
<feature type="chain" id="PRO_0000375040" description="Ribosomal protein uS12 methylthiotransferase RimO">
    <location>
        <begin position="1"/>
        <end position="444"/>
    </location>
</feature>
<feature type="domain" description="MTTase N-terminal" evidence="1">
    <location>
        <begin position="4"/>
        <end position="120"/>
    </location>
</feature>
<feature type="domain" description="Radical SAM core" evidence="2">
    <location>
        <begin position="143"/>
        <end position="371"/>
    </location>
</feature>
<feature type="domain" description="TRAM" evidence="1">
    <location>
        <begin position="374"/>
        <end position="442"/>
    </location>
</feature>
<feature type="binding site" evidence="1">
    <location>
        <position position="13"/>
    </location>
    <ligand>
        <name>[4Fe-4S] cluster</name>
        <dbReference type="ChEBI" id="CHEBI:49883"/>
        <label>1</label>
    </ligand>
</feature>
<feature type="binding site" evidence="1">
    <location>
        <position position="49"/>
    </location>
    <ligand>
        <name>[4Fe-4S] cluster</name>
        <dbReference type="ChEBI" id="CHEBI:49883"/>
        <label>1</label>
    </ligand>
</feature>
<feature type="binding site" evidence="1">
    <location>
        <position position="83"/>
    </location>
    <ligand>
        <name>[4Fe-4S] cluster</name>
        <dbReference type="ChEBI" id="CHEBI:49883"/>
        <label>1</label>
    </ligand>
</feature>
<feature type="binding site" evidence="1">
    <location>
        <position position="157"/>
    </location>
    <ligand>
        <name>[4Fe-4S] cluster</name>
        <dbReference type="ChEBI" id="CHEBI:49883"/>
        <label>2</label>
        <note>4Fe-4S-S-AdoMet</note>
    </ligand>
</feature>
<feature type="binding site" evidence="1">
    <location>
        <position position="161"/>
    </location>
    <ligand>
        <name>[4Fe-4S] cluster</name>
        <dbReference type="ChEBI" id="CHEBI:49883"/>
        <label>2</label>
        <note>4Fe-4S-S-AdoMet</note>
    </ligand>
</feature>
<feature type="binding site" evidence="1">
    <location>
        <position position="164"/>
    </location>
    <ligand>
        <name>[4Fe-4S] cluster</name>
        <dbReference type="ChEBI" id="CHEBI:49883"/>
        <label>2</label>
        <note>4Fe-4S-S-AdoMet</note>
    </ligand>
</feature>
<reference key="1">
    <citation type="submission" date="2006-10" db="EMBL/GenBank/DDBJ databases">
        <title>Complete sequence of Syntrophobacter fumaroxidans MPOB.</title>
        <authorList>
            <consortium name="US DOE Joint Genome Institute"/>
            <person name="Copeland A."/>
            <person name="Lucas S."/>
            <person name="Lapidus A."/>
            <person name="Barry K."/>
            <person name="Detter J.C."/>
            <person name="Glavina del Rio T."/>
            <person name="Hammon N."/>
            <person name="Israni S."/>
            <person name="Pitluck S."/>
            <person name="Goltsman E.G."/>
            <person name="Martinez M."/>
            <person name="Schmutz J."/>
            <person name="Larimer F."/>
            <person name="Land M."/>
            <person name="Hauser L."/>
            <person name="Kyrpides N."/>
            <person name="Kim E."/>
            <person name="Boone D.R."/>
            <person name="Brockman F."/>
            <person name="Culley D."/>
            <person name="Ferry J."/>
            <person name="Gunsalus R."/>
            <person name="McInerney M.J."/>
            <person name="Morrison M."/>
            <person name="Plugge C."/>
            <person name="Rohlin L."/>
            <person name="Scholten J."/>
            <person name="Sieber J."/>
            <person name="Stams A.J.M."/>
            <person name="Worm P."/>
            <person name="Henstra A.M."/>
            <person name="Richardson P."/>
        </authorList>
    </citation>
    <scope>NUCLEOTIDE SEQUENCE [LARGE SCALE GENOMIC DNA]</scope>
    <source>
        <strain>DSM 10017 / MPOB</strain>
    </source>
</reference>
<sequence length="444" mass="48467">MVSKSAALVSLGCAKNLVDSESMVSQLIELGYEMTPEVSQAALILVNTCGFLESAVRESIDTVLQLAGYKASGSCEKLVVAGCMVQRYGKKLLGLLPEVDLFLGTSHCHALKSFIRDHEAGSSERLRIAFPDHVDNGADRHLVEGRSSAYVKIAEGCGNRCAFCLIPRLRGPYRSRRAVDILREAHRLVACGAKELNIVAQDTTAFGSDRGEEHALVSLLESLEEIEKLEWVRLLYAYPDRITPELIRTMSQSRKVVPYLDIPLQHCVPRILASMGRSGTDPERIVDAIRSGIPGVALRTSLIVGFPGETEADFQALTAFVECTGFEHLGVFAFSPEPGTRAARMPDRVPPDVAQERRKVLLELQRGISRRRLESLVGRVLPVLVEGFHPETDLLLTGRLAVQAPEADGTVLITDGIGTPGEIMRCRVTAAHDYDVEAELLSAS</sequence>
<proteinExistence type="inferred from homology"/>
<protein>
    <recommendedName>
        <fullName evidence="1">Ribosomal protein uS12 methylthiotransferase RimO</fullName>
        <shortName evidence="1">uS12 MTTase</shortName>
        <shortName evidence="1">uS12 methylthiotransferase</shortName>
        <ecNumber evidence="1">2.8.4.4</ecNumber>
    </recommendedName>
    <alternativeName>
        <fullName evidence="1">Ribosomal protein uS12 (aspartate-C(3))-methylthiotransferase</fullName>
    </alternativeName>
    <alternativeName>
        <fullName evidence="1">Ribosome maturation factor RimO</fullName>
    </alternativeName>
</protein>
<accession>A0LIM0</accession>
<dbReference type="EC" id="2.8.4.4" evidence="1"/>
<dbReference type="EMBL" id="CP000478">
    <property type="protein sequence ID" value="ABK17272.1"/>
    <property type="molecule type" value="Genomic_DNA"/>
</dbReference>
<dbReference type="RefSeq" id="WP_011698442.1">
    <property type="nucleotide sequence ID" value="NC_008554.1"/>
</dbReference>
<dbReference type="SMR" id="A0LIM0"/>
<dbReference type="FunCoup" id="A0LIM0">
    <property type="interactions" value="380"/>
</dbReference>
<dbReference type="STRING" id="335543.Sfum_1585"/>
<dbReference type="KEGG" id="sfu:Sfum_1585"/>
<dbReference type="eggNOG" id="COG0621">
    <property type="taxonomic scope" value="Bacteria"/>
</dbReference>
<dbReference type="HOGENOM" id="CLU_018697_0_1_7"/>
<dbReference type="InParanoid" id="A0LIM0"/>
<dbReference type="Proteomes" id="UP000001784">
    <property type="component" value="Chromosome"/>
</dbReference>
<dbReference type="GO" id="GO:0005829">
    <property type="term" value="C:cytosol"/>
    <property type="evidence" value="ECO:0007669"/>
    <property type="project" value="TreeGrafter"/>
</dbReference>
<dbReference type="GO" id="GO:0051539">
    <property type="term" value="F:4 iron, 4 sulfur cluster binding"/>
    <property type="evidence" value="ECO:0007669"/>
    <property type="project" value="UniProtKB-UniRule"/>
</dbReference>
<dbReference type="GO" id="GO:0035599">
    <property type="term" value="F:aspartic acid methylthiotransferase activity"/>
    <property type="evidence" value="ECO:0007669"/>
    <property type="project" value="TreeGrafter"/>
</dbReference>
<dbReference type="GO" id="GO:0046872">
    <property type="term" value="F:metal ion binding"/>
    <property type="evidence" value="ECO:0007669"/>
    <property type="project" value="UniProtKB-KW"/>
</dbReference>
<dbReference type="GO" id="GO:0103039">
    <property type="term" value="F:protein methylthiotransferase activity"/>
    <property type="evidence" value="ECO:0007669"/>
    <property type="project" value="UniProtKB-EC"/>
</dbReference>
<dbReference type="GO" id="GO:0006400">
    <property type="term" value="P:tRNA modification"/>
    <property type="evidence" value="ECO:0007669"/>
    <property type="project" value="InterPro"/>
</dbReference>
<dbReference type="CDD" id="cd01335">
    <property type="entry name" value="Radical_SAM"/>
    <property type="match status" value="1"/>
</dbReference>
<dbReference type="FunFam" id="3.80.30.20:FF:000001">
    <property type="entry name" value="tRNA-2-methylthio-N(6)-dimethylallyladenosine synthase 2"/>
    <property type="match status" value="1"/>
</dbReference>
<dbReference type="Gene3D" id="3.40.50.12160">
    <property type="entry name" value="Methylthiotransferase, N-terminal domain"/>
    <property type="match status" value="1"/>
</dbReference>
<dbReference type="Gene3D" id="2.40.50.140">
    <property type="entry name" value="Nucleic acid-binding proteins"/>
    <property type="match status" value="1"/>
</dbReference>
<dbReference type="Gene3D" id="3.80.30.20">
    <property type="entry name" value="tm_1862 like domain"/>
    <property type="match status" value="1"/>
</dbReference>
<dbReference type="HAMAP" id="MF_01865">
    <property type="entry name" value="MTTase_RimO"/>
    <property type="match status" value="1"/>
</dbReference>
<dbReference type="InterPro" id="IPR006638">
    <property type="entry name" value="Elp3/MiaA/NifB-like_rSAM"/>
</dbReference>
<dbReference type="InterPro" id="IPR005839">
    <property type="entry name" value="Methylthiotransferase"/>
</dbReference>
<dbReference type="InterPro" id="IPR020612">
    <property type="entry name" value="Methylthiotransferase_CS"/>
</dbReference>
<dbReference type="InterPro" id="IPR013848">
    <property type="entry name" value="Methylthiotransferase_N"/>
</dbReference>
<dbReference type="InterPro" id="IPR038135">
    <property type="entry name" value="Methylthiotransferase_N_sf"/>
</dbReference>
<dbReference type="InterPro" id="IPR012340">
    <property type="entry name" value="NA-bd_OB-fold"/>
</dbReference>
<dbReference type="InterPro" id="IPR005840">
    <property type="entry name" value="Ribosomal_uS12_MeSTrfase_RimO"/>
</dbReference>
<dbReference type="InterPro" id="IPR007197">
    <property type="entry name" value="rSAM"/>
</dbReference>
<dbReference type="InterPro" id="IPR023404">
    <property type="entry name" value="rSAM_horseshoe"/>
</dbReference>
<dbReference type="InterPro" id="IPR002792">
    <property type="entry name" value="TRAM_dom"/>
</dbReference>
<dbReference type="NCBIfam" id="TIGR01125">
    <property type="entry name" value="30S ribosomal protein S12 methylthiotransferase RimO"/>
    <property type="match status" value="1"/>
</dbReference>
<dbReference type="NCBIfam" id="TIGR00089">
    <property type="entry name" value="MiaB/RimO family radical SAM methylthiotransferase"/>
    <property type="match status" value="1"/>
</dbReference>
<dbReference type="PANTHER" id="PTHR43837">
    <property type="entry name" value="RIBOSOMAL PROTEIN S12 METHYLTHIOTRANSFERASE RIMO"/>
    <property type="match status" value="1"/>
</dbReference>
<dbReference type="PANTHER" id="PTHR43837:SF1">
    <property type="entry name" value="RIBOSOMAL PROTEIN US12 METHYLTHIOTRANSFERASE RIMO"/>
    <property type="match status" value="1"/>
</dbReference>
<dbReference type="Pfam" id="PF04055">
    <property type="entry name" value="Radical_SAM"/>
    <property type="match status" value="1"/>
</dbReference>
<dbReference type="Pfam" id="PF18693">
    <property type="entry name" value="TRAM_2"/>
    <property type="match status" value="1"/>
</dbReference>
<dbReference type="Pfam" id="PF00919">
    <property type="entry name" value="UPF0004"/>
    <property type="match status" value="1"/>
</dbReference>
<dbReference type="SFLD" id="SFLDG01082">
    <property type="entry name" value="B12-binding_domain_containing"/>
    <property type="match status" value="1"/>
</dbReference>
<dbReference type="SFLD" id="SFLDS00029">
    <property type="entry name" value="Radical_SAM"/>
    <property type="match status" value="1"/>
</dbReference>
<dbReference type="SFLD" id="SFLDF00274">
    <property type="entry name" value="ribosomal_protein_S12_methylth"/>
    <property type="match status" value="1"/>
</dbReference>
<dbReference type="SMART" id="SM00729">
    <property type="entry name" value="Elp3"/>
    <property type="match status" value="1"/>
</dbReference>
<dbReference type="SUPFAM" id="SSF102114">
    <property type="entry name" value="Radical SAM enzymes"/>
    <property type="match status" value="1"/>
</dbReference>
<dbReference type="PROSITE" id="PS51449">
    <property type="entry name" value="MTTASE_N"/>
    <property type="match status" value="1"/>
</dbReference>
<dbReference type="PROSITE" id="PS01278">
    <property type="entry name" value="MTTASE_RADICAL"/>
    <property type="match status" value="1"/>
</dbReference>
<dbReference type="PROSITE" id="PS51918">
    <property type="entry name" value="RADICAL_SAM"/>
    <property type="match status" value="1"/>
</dbReference>
<dbReference type="PROSITE" id="PS50926">
    <property type="entry name" value="TRAM"/>
    <property type="match status" value="1"/>
</dbReference>
<comment type="function">
    <text evidence="1">Catalyzes the methylthiolation of an aspartic acid residue of ribosomal protein uS12.</text>
</comment>
<comment type="catalytic activity">
    <reaction evidence="1">
        <text>L-aspartate(89)-[ribosomal protein uS12]-hydrogen + (sulfur carrier)-SH + AH2 + 2 S-adenosyl-L-methionine = 3-methylsulfanyl-L-aspartate(89)-[ribosomal protein uS12]-hydrogen + (sulfur carrier)-H + 5'-deoxyadenosine + L-methionine + A + S-adenosyl-L-homocysteine + 2 H(+)</text>
        <dbReference type="Rhea" id="RHEA:37087"/>
        <dbReference type="Rhea" id="RHEA-COMP:10460"/>
        <dbReference type="Rhea" id="RHEA-COMP:10461"/>
        <dbReference type="Rhea" id="RHEA-COMP:14737"/>
        <dbReference type="Rhea" id="RHEA-COMP:14739"/>
        <dbReference type="ChEBI" id="CHEBI:13193"/>
        <dbReference type="ChEBI" id="CHEBI:15378"/>
        <dbReference type="ChEBI" id="CHEBI:17319"/>
        <dbReference type="ChEBI" id="CHEBI:17499"/>
        <dbReference type="ChEBI" id="CHEBI:29917"/>
        <dbReference type="ChEBI" id="CHEBI:29961"/>
        <dbReference type="ChEBI" id="CHEBI:57844"/>
        <dbReference type="ChEBI" id="CHEBI:57856"/>
        <dbReference type="ChEBI" id="CHEBI:59789"/>
        <dbReference type="ChEBI" id="CHEBI:64428"/>
        <dbReference type="ChEBI" id="CHEBI:73599"/>
        <dbReference type="EC" id="2.8.4.4"/>
    </reaction>
</comment>
<comment type="cofactor">
    <cofactor evidence="1">
        <name>[4Fe-4S] cluster</name>
        <dbReference type="ChEBI" id="CHEBI:49883"/>
    </cofactor>
    <text evidence="1">Binds 2 [4Fe-4S] clusters. One cluster is coordinated with 3 cysteines and an exchangeable S-adenosyl-L-methionine.</text>
</comment>
<comment type="subcellular location">
    <subcellularLocation>
        <location evidence="1">Cytoplasm</location>
    </subcellularLocation>
</comment>
<comment type="similarity">
    <text evidence="1">Belongs to the methylthiotransferase family. RimO subfamily.</text>
</comment>
<keyword id="KW-0004">4Fe-4S</keyword>
<keyword id="KW-0963">Cytoplasm</keyword>
<keyword id="KW-0408">Iron</keyword>
<keyword id="KW-0411">Iron-sulfur</keyword>
<keyword id="KW-0479">Metal-binding</keyword>
<keyword id="KW-1185">Reference proteome</keyword>
<keyword id="KW-0949">S-adenosyl-L-methionine</keyword>
<keyword id="KW-0808">Transferase</keyword>
<organism>
    <name type="scientific">Syntrophobacter fumaroxidans (strain DSM 10017 / MPOB)</name>
    <dbReference type="NCBI Taxonomy" id="335543"/>
    <lineage>
        <taxon>Bacteria</taxon>
        <taxon>Pseudomonadati</taxon>
        <taxon>Thermodesulfobacteriota</taxon>
        <taxon>Syntrophobacteria</taxon>
        <taxon>Syntrophobacterales</taxon>
        <taxon>Syntrophobacteraceae</taxon>
        <taxon>Syntrophobacter</taxon>
    </lineage>
</organism>
<name>RIMO_SYNFM</name>